<gene>
    <name evidence="1" type="primary">rplW</name>
    <name type="ordered locus">HPG27_1266</name>
</gene>
<reference key="1">
    <citation type="journal article" date="2009" name="J. Bacteriol.">
        <title>The complete genome sequence of Helicobacter pylori strain G27.</title>
        <authorList>
            <person name="Baltrus D.A."/>
            <person name="Amieva M.R."/>
            <person name="Covacci A."/>
            <person name="Lowe T.M."/>
            <person name="Merrell D.S."/>
            <person name="Ottemann K.M."/>
            <person name="Stein M."/>
            <person name="Salama N.R."/>
            <person name="Guillemin K."/>
        </authorList>
    </citation>
    <scope>NUCLEOTIDE SEQUENCE [LARGE SCALE GENOMIC DNA]</scope>
    <source>
        <strain>G27</strain>
    </source>
</reference>
<organism>
    <name type="scientific">Helicobacter pylori (strain G27)</name>
    <dbReference type="NCBI Taxonomy" id="563041"/>
    <lineage>
        <taxon>Bacteria</taxon>
        <taxon>Pseudomonadati</taxon>
        <taxon>Campylobacterota</taxon>
        <taxon>Epsilonproteobacteria</taxon>
        <taxon>Campylobacterales</taxon>
        <taxon>Helicobacteraceae</taxon>
        <taxon>Helicobacter</taxon>
    </lineage>
</organism>
<proteinExistence type="inferred from homology"/>
<protein>
    <recommendedName>
        <fullName evidence="1">Large ribosomal subunit protein uL23</fullName>
    </recommendedName>
    <alternativeName>
        <fullName evidence="2">50S ribosomal protein L23</fullName>
    </alternativeName>
</protein>
<dbReference type="EMBL" id="CP001173">
    <property type="protein sequence ID" value="ACI28014.1"/>
    <property type="molecule type" value="Genomic_DNA"/>
</dbReference>
<dbReference type="RefSeq" id="WP_000763613.1">
    <property type="nucleotide sequence ID" value="NC_011333.1"/>
</dbReference>
<dbReference type="SMR" id="B5Z8W5"/>
<dbReference type="KEGG" id="hpg:HPG27_1266"/>
<dbReference type="HOGENOM" id="CLU_037562_3_1_7"/>
<dbReference type="Proteomes" id="UP000001735">
    <property type="component" value="Chromosome"/>
</dbReference>
<dbReference type="GO" id="GO:1990904">
    <property type="term" value="C:ribonucleoprotein complex"/>
    <property type="evidence" value="ECO:0007669"/>
    <property type="project" value="UniProtKB-KW"/>
</dbReference>
<dbReference type="GO" id="GO:0005840">
    <property type="term" value="C:ribosome"/>
    <property type="evidence" value="ECO:0007669"/>
    <property type="project" value="UniProtKB-KW"/>
</dbReference>
<dbReference type="GO" id="GO:0019843">
    <property type="term" value="F:rRNA binding"/>
    <property type="evidence" value="ECO:0007669"/>
    <property type="project" value="UniProtKB-UniRule"/>
</dbReference>
<dbReference type="GO" id="GO:0003735">
    <property type="term" value="F:structural constituent of ribosome"/>
    <property type="evidence" value="ECO:0007669"/>
    <property type="project" value="InterPro"/>
</dbReference>
<dbReference type="GO" id="GO:0006412">
    <property type="term" value="P:translation"/>
    <property type="evidence" value="ECO:0007669"/>
    <property type="project" value="UniProtKB-UniRule"/>
</dbReference>
<dbReference type="Gene3D" id="3.30.70.330">
    <property type="match status" value="1"/>
</dbReference>
<dbReference type="HAMAP" id="MF_01369_B">
    <property type="entry name" value="Ribosomal_uL23_B"/>
    <property type="match status" value="1"/>
</dbReference>
<dbReference type="InterPro" id="IPR012677">
    <property type="entry name" value="Nucleotide-bd_a/b_plait_sf"/>
</dbReference>
<dbReference type="InterPro" id="IPR013025">
    <property type="entry name" value="Ribosomal_uL23-like"/>
</dbReference>
<dbReference type="InterPro" id="IPR012678">
    <property type="entry name" value="Ribosomal_uL23/eL15/eS24_sf"/>
</dbReference>
<dbReference type="NCBIfam" id="NF004362">
    <property type="entry name" value="PRK05738.2-2"/>
    <property type="match status" value="1"/>
</dbReference>
<dbReference type="Pfam" id="PF00276">
    <property type="entry name" value="Ribosomal_L23"/>
    <property type="match status" value="1"/>
</dbReference>
<dbReference type="SUPFAM" id="SSF54189">
    <property type="entry name" value="Ribosomal proteins S24e, L23 and L15e"/>
    <property type="match status" value="1"/>
</dbReference>
<evidence type="ECO:0000255" key="1">
    <source>
        <dbReference type="HAMAP-Rule" id="MF_01369"/>
    </source>
</evidence>
<evidence type="ECO:0000305" key="2"/>
<name>RL23_HELPG</name>
<accession>B5Z8W5</accession>
<comment type="function">
    <text evidence="1">One of the early assembly proteins it binds 23S rRNA. One of the proteins that surrounds the polypeptide exit tunnel on the outside of the ribosome. Forms the main docking site for trigger factor binding to the ribosome.</text>
</comment>
<comment type="subunit">
    <text evidence="1">Part of the 50S ribosomal subunit. Contacts protein L29, and trigger factor when it is bound to the ribosome.</text>
</comment>
<comment type="similarity">
    <text evidence="1">Belongs to the universal ribosomal protein uL23 family.</text>
</comment>
<feature type="chain" id="PRO_1000144574" description="Large ribosomal subunit protein uL23">
    <location>
        <begin position="1"/>
        <end position="93"/>
    </location>
</feature>
<keyword id="KW-1185">Reference proteome</keyword>
<keyword id="KW-0687">Ribonucleoprotein</keyword>
<keyword id="KW-0689">Ribosomal protein</keyword>
<keyword id="KW-0694">RNA-binding</keyword>
<keyword id="KW-0699">rRNA-binding</keyword>
<sequence length="93" mass="10454">MADIMDIKSILYTEKSLGLQEKGVLVVQTAQNVTKNQLKEVFKTYFGFEPLKINSLKQEGKVKRFRGKLGQRKSFKKFYVKVPEGASIAALGA</sequence>